<feature type="chain" id="PRO_1000096988" description="3-methyl-2-oxobutanoate hydroxymethyltransferase">
    <location>
        <begin position="1"/>
        <end position="276"/>
    </location>
</feature>
<feature type="active site" description="Proton acceptor" evidence="1">
    <location>
        <position position="187"/>
    </location>
</feature>
<feature type="binding site" evidence="1">
    <location>
        <begin position="49"/>
        <end position="50"/>
    </location>
    <ligand>
        <name>3-methyl-2-oxobutanoate</name>
        <dbReference type="ChEBI" id="CHEBI:11851"/>
    </ligand>
</feature>
<feature type="binding site" evidence="1">
    <location>
        <position position="49"/>
    </location>
    <ligand>
        <name>Mg(2+)</name>
        <dbReference type="ChEBI" id="CHEBI:18420"/>
    </ligand>
</feature>
<feature type="binding site" evidence="1">
    <location>
        <position position="88"/>
    </location>
    <ligand>
        <name>3-methyl-2-oxobutanoate</name>
        <dbReference type="ChEBI" id="CHEBI:11851"/>
    </ligand>
</feature>
<feature type="binding site" evidence="1">
    <location>
        <position position="88"/>
    </location>
    <ligand>
        <name>Mg(2+)</name>
        <dbReference type="ChEBI" id="CHEBI:18420"/>
    </ligand>
</feature>
<feature type="binding site" evidence="1">
    <location>
        <position position="118"/>
    </location>
    <ligand>
        <name>3-methyl-2-oxobutanoate</name>
        <dbReference type="ChEBI" id="CHEBI:11851"/>
    </ligand>
</feature>
<feature type="binding site" evidence="1">
    <location>
        <position position="120"/>
    </location>
    <ligand>
        <name>Mg(2+)</name>
        <dbReference type="ChEBI" id="CHEBI:18420"/>
    </ligand>
</feature>
<reference key="1">
    <citation type="journal article" date="2008" name="J. Bacteriol.">
        <title>Genome sequence of the chemolithoautotrophic bacterium Oligotropha carboxidovorans OM5T.</title>
        <authorList>
            <person name="Paul D."/>
            <person name="Bridges S."/>
            <person name="Burgess S.C."/>
            <person name="Dandass Y."/>
            <person name="Lawrence M.L."/>
        </authorList>
    </citation>
    <scope>NUCLEOTIDE SEQUENCE [LARGE SCALE GENOMIC DNA]</scope>
    <source>
        <strain>ATCC 49405 / DSM 1227 / KCTC 32145 / OM5</strain>
    </source>
</reference>
<reference key="2">
    <citation type="journal article" date="2011" name="J. Bacteriol.">
        <title>Complete genome sequences of the chemolithoautotrophic Oligotropha carboxidovorans strains OM4 and OM5.</title>
        <authorList>
            <person name="Volland S."/>
            <person name="Rachinger M."/>
            <person name="Strittmatter A."/>
            <person name="Daniel R."/>
            <person name="Gottschalk G."/>
            <person name="Meyer O."/>
        </authorList>
    </citation>
    <scope>NUCLEOTIDE SEQUENCE [LARGE SCALE GENOMIC DNA]</scope>
    <source>
        <strain>ATCC 49405 / DSM 1227 / KCTC 32145 / OM5</strain>
    </source>
</reference>
<accession>B6JGY0</accession>
<accession>F8C0J6</accession>
<dbReference type="EC" id="2.1.2.11" evidence="1"/>
<dbReference type="EMBL" id="CP001196">
    <property type="protein sequence ID" value="ACI93501.1"/>
    <property type="molecule type" value="Genomic_DNA"/>
</dbReference>
<dbReference type="EMBL" id="CP002826">
    <property type="protein sequence ID" value="AEI06372.1"/>
    <property type="molecule type" value="Genomic_DNA"/>
</dbReference>
<dbReference type="RefSeq" id="WP_012563527.1">
    <property type="nucleotide sequence ID" value="NC_015684.1"/>
</dbReference>
<dbReference type="SMR" id="B6JGY0"/>
<dbReference type="STRING" id="504832.OCA5_c16580"/>
<dbReference type="KEGG" id="oca:OCAR_6388"/>
<dbReference type="KEGG" id="ocg:OCA5_c16580"/>
<dbReference type="PATRIC" id="fig|504832.7.peg.1768"/>
<dbReference type="eggNOG" id="COG0413">
    <property type="taxonomic scope" value="Bacteria"/>
</dbReference>
<dbReference type="HOGENOM" id="CLU_036645_1_0_5"/>
<dbReference type="OrthoDB" id="9781789at2"/>
<dbReference type="UniPathway" id="UPA00028">
    <property type="reaction ID" value="UER00003"/>
</dbReference>
<dbReference type="Proteomes" id="UP000007730">
    <property type="component" value="Chromosome"/>
</dbReference>
<dbReference type="GO" id="GO:0005737">
    <property type="term" value="C:cytoplasm"/>
    <property type="evidence" value="ECO:0007669"/>
    <property type="project" value="UniProtKB-SubCell"/>
</dbReference>
<dbReference type="GO" id="GO:0003864">
    <property type="term" value="F:3-methyl-2-oxobutanoate hydroxymethyltransferase activity"/>
    <property type="evidence" value="ECO:0007669"/>
    <property type="project" value="UniProtKB-UniRule"/>
</dbReference>
<dbReference type="GO" id="GO:0000287">
    <property type="term" value="F:magnesium ion binding"/>
    <property type="evidence" value="ECO:0007669"/>
    <property type="project" value="TreeGrafter"/>
</dbReference>
<dbReference type="GO" id="GO:0015940">
    <property type="term" value="P:pantothenate biosynthetic process"/>
    <property type="evidence" value="ECO:0007669"/>
    <property type="project" value="UniProtKB-UniRule"/>
</dbReference>
<dbReference type="CDD" id="cd06557">
    <property type="entry name" value="KPHMT-like"/>
    <property type="match status" value="1"/>
</dbReference>
<dbReference type="FunFam" id="3.20.20.60:FF:000003">
    <property type="entry name" value="3-methyl-2-oxobutanoate hydroxymethyltransferase"/>
    <property type="match status" value="1"/>
</dbReference>
<dbReference type="Gene3D" id="3.20.20.60">
    <property type="entry name" value="Phosphoenolpyruvate-binding domains"/>
    <property type="match status" value="1"/>
</dbReference>
<dbReference type="HAMAP" id="MF_00156">
    <property type="entry name" value="PanB"/>
    <property type="match status" value="1"/>
</dbReference>
<dbReference type="InterPro" id="IPR003700">
    <property type="entry name" value="Pantoate_hydroxy_MeTrfase"/>
</dbReference>
<dbReference type="InterPro" id="IPR015813">
    <property type="entry name" value="Pyrv/PenolPyrv_kinase-like_dom"/>
</dbReference>
<dbReference type="InterPro" id="IPR040442">
    <property type="entry name" value="Pyrv_kinase-like_dom_sf"/>
</dbReference>
<dbReference type="NCBIfam" id="TIGR00222">
    <property type="entry name" value="panB"/>
    <property type="match status" value="1"/>
</dbReference>
<dbReference type="NCBIfam" id="NF001452">
    <property type="entry name" value="PRK00311.1"/>
    <property type="match status" value="1"/>
</dbReference>
<dbReference type="PANTHER" id="PTHR20881">
    <property type="entry name" value="3-METHYL-2-OXOBUTANOATE HYDROXYMETHYLTRANSFERASE"/>
    <property type="match status" value="1"/>
</dbReference>
<dbReference type="PANTHER" id="PTHR20881:SF0">
    <property type="entry name" value="3-METHYL-2-OXOBUTANOATE HYDROXYMETHYLTRANSFERASE"/>
    <property type="match status" value="1"/>
</dbReference>
<dbReference type="Pfam" id="PF02548">
    <property type="entry name" value="Pantoate_transf"/>
    <property type="match status" value="1"/>
</dbReference>
<dbReference type="PIRSF" id="PIRSF000388">
    <property type="entry name" value="Pantoate_hydroxy_MeTrfase"/>
    <property type="match status" value="1"/>
</dbReference>
<dbReference type="SUPFAM" id="SSF51621">
    <property type="entry name" value="Phosphoenolpyruvate/pyruvate domain"/>
    <property type="match status" value="1"/>
</dbReference>
<keyword id="KW-0963">Cytoplasm</keyword>
<keyword id="KW-0460">Magnesium</keyword>
<keyword id="KW-0479">Metal-binding</keyword>
<keyword id="KW-0566">Pantothenate biosynthesis</keyword>
<keyword id="KW-1185">Reference proteome</keyword>
<keyword id="KW-0808">Transferase</keyword>
<comment type="function">
    <text evidence="1">Catalyzes the reversible reaction in which hydroxymethyl group from 5,10-methylenetetrahydrofolate is transferred onto alpha-ketoisovalerate to form ketopantoate.</text>
</comment>
<comment type="catalytic activity">
    <reaction evidence="1">
        <text>3-methyl-2-oxobutanoate + (6R)-5,10-methylene-5,6,7,8-tetrahydrofolate + H2O = 2-dehydropantoate + (6S)-5,6,7,8-tetrahydrofolate</text>
        <dbReference type="Rhea" id="RHEA:11824"/>
        <dbReference type="ChEBI" id="CHEBI:11561"/>
        <dbReference type="ChEBI" id="CHEBI:11851"/>
        <dbReference type="ChEBI" id="CHEBI:15377"/>
        <dbReference type="ChEBI" id="CHEBI:15636"/>
        <dbReference type="ChEBI" id="CHEBI:57453"/>
        <dbReference type="EC" id="2.1.2.11"/>
    </reaction>
</comment>
<comment type="cofactor">
    <cofactor evidence="1">
        <name>Mg(2+)</name>
        <dbReference type="ChEBI" id="CHEBI:18420"/>
    </cofactor>
    <text evidence="1">Binds 1 Mg(2+) ion per subunit.</text>
</comment>
<comment type="pathway">
    <text evidence="1">Cofactor biosynthesis; (R)-pantothenate biosynthesis; (R)-pantoate from 3-methyl-2-oxobutanoate: step 1/2.</text>
</comment>
<comment type="subunit">
    <text evidence="1">Homodecamer; pentamer of dimers.</text>
</comment>
<comment type="subcellular location">
    <subcellularLocation>
        <location evidence="1">Cytoplasm</location>
    </subcellularLocation>
</comment>
<comment type="similarity">
    <text evidence="1">Belongs to the PanB family.</text>
</comment>
<evidence type="ECO:0000255" key="1">
    <source>
        <dbReference type="HAMAP-Rule" id="MF_00156"/>
    </source>
</evidence>
<name>PANB_AFIC5</name>
<gene>
    <name evidence="1" type="primary">panB</name>
    <name type="ordered locus">OCAR_6388</name>
    <name type="ordered locus">OCA5_c16580</name>
</gene>
<organism>
    <name type="scientific">Afipia carboxidovorans (strain ATCC 49405 / DSM 1227 / KCTC 32145 / OM5)</name>
    <name type="common">Oligotropha carboxidovorans</name>
    <dbReference type="NCBI Taxonomy" id="504832"/>
    <lineage>
        <taxon>Bacteria</taxon>
        <taxon>Pseudomonadati</taxon>
        <taxon>Pseudomonadota</taxon>
        <taxon>Alphaproteobacteria</taxon>
        <taxon>Hyphomicrobiales</taxon>
        <taxon>Nitrobacteraceae</taxon>
        <taxon>Afipia</taxon>
    </lineage>
</organism>
<proteinExistence type="inferred from homology"/>
<protein>
    <recommendedName>
        <fullName evidence="1">3-methyl-2-oxobutanoate hydroxymethyltransferase</fullName>
        <ecNumber evidence="1">2.1.2.11</ecNumber>
    </recommendedName>
    <alternativeName>
        <fullName evidence="1">Ketopantoate hydroxymethyltransferase</fullName>
        <shortName evidence="1">KPHMT</shortName>
    </alternativeName>
</protein>
<sequence length="276" mass="29405">MSIQNAARRKTAPEIFARKSGEPIVMLTSYHAHTAALVDKYCDIILVGDSLGNVMHGFETTVPVTLEMMILQGHAVMRGSKQALVVVDMPFGSYEASKEQAFHSAARVLKETGCGAIKVEGGQRMAETIAFLVNRGVPVMGHVGLTPQSINTLGSFRARGRDEADSAMILEDAKAVSEAGAFSIVVEAVAEPLGRKITEAVAAPTIGIGASVACDGQVLVLEDMLGLSPWAPKFVKRYGDLGPGIEKAIQDYADEVRSRAFPGPEHVYNLKPKAAK</sequence>